<comment type="catalytic activity">
    <reaction evidence="1">
        <text>5-amino-1-(5-phospho-D-ribosyl)imidazole-4-carboxylate + L-aspartate + ATP = (2S)-2-[5-amino-1-(5-phospho-beta-D-ribosyl)imidazole-4-carboxamido]succinate + ADP + phosphate + 2 H(+)</text>
        <dbReference type="Rhea" id="RHEA:22628"/>
        <dbReference type="ChEBI" id="CHEBI:15378"/>
        <dbReference type="ChEBI" id="CHEBI:29991"/>
        <dbReference type="ChEBI" id="CHEBI:30616"/>
        <dbReference type="ChEBI" id="CHEBI:43474"/>
        <dbReference type="ChEBI" id="CHEBI:58443"/>
        <dbReference type="ChEBI" id="CHEBI:77657"/>
        <dbReference type="ChEBI" id="CHEBI:456216"/>
        <dbReference type="EC" id="6.3.2.6"/>
    </reaction>
</comment>
<comment type="pathway">
    <text evidence="1">Purine metabolism; IMP biosynthesis via de novo pathway; 5-amino-1-(5-phospho-D-ribosyl)imidazole-4-carboxamide from 5-amino-1-(5-phospho-D-ribosyl)imidazole-4-carboxylate: step 1/2.</text>
</comment>
<comment type="similarity">
    <text evidence="1">Belongs to the SAICAR synthetase family.</text>
</comment>
<name>PUR7_SHESM</name>
<proteinExistence type="inferred from homology"/>
<evidence type="ECO:0000255" key="1">
    <source>
        <dbReference type="HAMAP-Rule" id="MF_00137"/>
    </source>
</evidence>
<sequence>MSLADSVLAVNNDLPIRTDNPVHSGKVRSVYWLTDADSRRLIQTKGYNVPEDTPLAIMVISDRISAFDCIFHGEGGLKGIPGKGAALNAISNHWFKLFAENGLADSHILDIPHPFVWIVQKARPIKVEAICRQYITGSMWRAYSKGERVFCGITLPEGLEKDQKLPDLLITPSTKGILTGIPGVPAQDDVNISRSDIEANYQAFGFEKVEDIDLYEKLLKDGFKVIAKALADLDQVFVDTKFEFGYVTDKNGNSKLIYMDEVGTPDSSRIWDGAAYRDGKILENSKEGFRQFLLNHFPDPDILLNKDRMPEREALARDNALPLEAMMDVSRTYTGIAEKVTGAAIPLPANPKADIIKILREEYDLIV</sequence>
<accession>Q0HEK4</accession>
<organism>
    <name type="scientific">Shewanella sp. (strain MR-4)</name>
    <dbReference type="NCBI Taxonomy" id="60480"/>
    <lineage>
        <taxon>Bacteria</taxon>
        <taxon>Pseudomonadati</taxon>
        <taxon>Pseudomonadota</taxon>
        <taxon>Gammaproteobacteria</taxon>
        <taxon>Alteromonadales</taxon>
        <taxon>Shewanellaceae</taxon>
        <taxon>Shewanella</taxon>
    </lineage>
</organism>
<gene>
    <name evidence="1" type="primary">purC</name>
    <name type="ordered locus">Shewmr4_3447</name>
</gene>
<protein>
    <recommendedName>
        <fullName evidence="1">Phosphoribosylaminoimidazole-succinocarboxamide synthase</fullName>
        <ecNumber evidence="1">6.3.2.6</ecNumber>
    </recommendedName>
    <alternativeName>
        <fullName evidence="1">SAICAR synthetase</fullName>
    </alternativeName>
</protein>
<dbReference type="EC" id="6.3.2.6" evidence="1"/>
<dbReference type="EMBL" id="CP000446">
    <property type="protein sequence ID" value="ABI40513.1"/>
    <property type="molecule type" value="Genomic_DNA"/>
</dbReference>
<dbReference type="RefSeq" id="WP_011624178.1">
    <property type="nucleotide sequence ID" value="NC_008321.1"/>
</dbReference>
<dbReference type="SMR" id="Q0HEK4"/>
<dbReference type="KEGG" id="she:Shewmr4_3447"/>
<dbReference type="HOGENOM" id="CLU_064197_0_0_6"/>
<dbReference type="UniPathway" id="UPA00074">
    <property type="reaction ID" value="UER00131"/>
</dbReference>
<dbReference type="GO" id="GO:0005737">
    <property type="term" value="C:cytoplasm"/>
    <property type="evidence" value="ECO:0007669"/>
    <property type="project" value="TreeGrafter"/>
</dbReference>
<dbReference type="GO" id="GO:0005524">
    <property type="term" value="F:ATP binding"/>
    <property type="evidence" value="ECO:0007669"/>
    <property type="project" value="UniProtKB-KW"/>
</dbReference>
<dbReference type="GO" id="GO:0004639">
    <property type="term" value="F:phosphoribosylaminoimidazolesuccinocarboxamide synthase activity"/>
    <property type="evidence" value="ECO:0007669"/>
    <property type="project" value="UniProtKB-UniRule"/>
</dbReference>
<dbReference type="GO" id="GO:0006189">
    <property type="term" value="P:'de novo' IMP biosynthetic process"/>
    <property type="evidence" value="ECO:0007669"/>
    <property type="project" value="UniProtKB-UniRule"/>
</dbReference>
<dbReference type="CDD" id="cd01414">
    <property type="entry name" value="SAICAR_synt_Sc"/>
    <property type="match status" value="1"/>
</dbReference>
<dbReference type="FunFam" id="3.30.200.20:FF:000597">
    <property type="entry name" value="Phosphoribosylaminoimidazole-succinocarboxamide synthase"/>
    <property type="match status" value="1"/>
</dbReference>
<dbReference type="FunFam" id="3.30.470.20:FF:000067">
    <property type="entry name" value="Phosphoribosylaminoimidazole-succinocarboxamide synthase"/>
    <property type="match status" value="1"/>
</dbReference>
<dbReference type="Gene3D" id="3.30.470.20">
    <property type="entry name" value="ATP-grasp fold, B domain"/>
    <property type="match status" value="1"/>
</dbReference>
<dbReference type="Gene3D" id="3.30.200.20">
    <property type="entry name" value="Phosphorylase Kinase, domain 1"/>
    <property type="match status" value="1"/>
</dbReference>
<dbReference type="HAMAP" id="MF_00137">
    <property type="entry name" value="SAICAR_synth"/>
    <property type="match status" value="1"/>
</dbReference>
<dbReference type="InterPro" id="IPR028923">
    <property type="entry name" value="SAICAR_synt/ADE2_N"/>
</dbReference>
<dbReference type="InterPro" id="IPR014106">
    <property type="entry name" value="SAICAR_synthase_Vibrio-typ"/>
</dbReference>
<dbReference type="InterPro" id="IPR018236">
    <property type="entry name" value="SAICAR_synthetase_CS"/>
</dbReference>
<dbReference type="NCBIfam" id="NF010567">
    <property type="entry name" value="PRK13960.1"/>
    <property type="match status" value="1"/>
</dbReference>
<dbReference type="NCBIfam" id="TIGR02735">
    <property type="entry name" value="purC_vibrio"/>
    <property type="match status" value="1"/>
</dbReference>
<dbReference type="PANTHER" id="PTHR43700">
    <property type="entry name" value="PHOSPHORIBOSYLAMINOIMIDAZOLE-SUCCINOCARBOXAMIDE SYNTHASE"/>
    <property type="match status" value="1"/>
</dbReference>
<dbReference type="PANTHER" id="PTHR43700:SF1">
    <property type="entry name" value="PHOSPHORIBOSYLAMINOIMIDAZOLE-SUCCINOCARBOXAMIDE SYNTHASE"/>
    <property type="match status" value="1"/>
</dbReference>
<dbReference type="Pfam" id="PF01259">
    <property type="entry name" value="SAICAR_synt"/>
    <property type="match status" value="1"/>
</dbReference>
<dbReference type="SUPFAM" id="SSF56104">
    <property type="entry name" value="SAICAR synthase-like"/>
    <property type="match status" value="1"/>
</dbReference>
<dbReference type="PROSITE" id="PS01057">
    <property type="entry name" value="SAICAR_SYNTHETASE_1"/>
    <property type="match status" value="1"/>
</dbReference>
<keyword id="KW-0067">ATP-binding</keyword>
<keyword id="KW-0436">Ligase</keyword>
<keyword id="KW-0547">Nucleotide-binding</keyword>
<keyword id="KW-0658">Purine biosynthesis</keyword>
<reference key="1">
    <citation type="submission" date="2006-08" db="EMBL/GenBank/DDBJ databases">
        <title>Complete sequence of Shewanella sp. MR-4.</title>
        <authorList>
            <consortium name="US DOE Joint Genome Institute"/>
            <person name="Copeland A."/>
            <person name="Lucas S."/>
            <person name="Lapidus A."/>
            <person name="Barry K."/>
            <person name="Detter J.C."/>
            <person name="Glavina del Rio T."/>
            <person name="Hammon N."/>
            <person name="Israni S."/>
            <person name="Dalin E."/>
            <person name="Tice H."/>
            <person name="Pitluck S."/>
            <person name="Kiss H."/>
            <person name="Brettin T."/>
            <person name="Bruce D."/>
            <person name="Han C."/>
            <person name="Tapia R."/>
            <person name="Gilna P."/>
            <person name="Schmutz J."/>
            <person name="Larimer F."/>
            <person name="Land M."/>
            <person name="Hauser L."/>
            <person name="Kyrpides N."/>
            <person name="Mikhailova N."/>
            <person name="Nealson K."/>
            <person name="Konstantinidis K."/>
            <person name="Klappenbach J."/>
            <person name="Tiedje J."/>
            <person name="Richardson P."/>
        </authorList>
    </citation>
    <scope>NUCLEOTIDE SEQUENCE [LARGE SCALE GENOMIC DNA]</scope>
    <source>
        <strain>MR-4</strain>
    </source>
</reference>
<feature type="chain" id="PRO_1000117854" description="Phosphoribosylaminoimidazole-succinocarboxamide synthase">
    <location>
        <begin position="1"/>
        <end position="367"/>
    </location>
</feature>